<evidence type="ECO:0000250" key="1">
    <source>
        <dbReference type="UniProtKB" id="P02794"/>
    </source>
</evidence>
<evidence type="ECO:0000250" key="2">
    <source>
        <dbReference type="UniProtKB" id="P09528"/>
    </source>
</evidence>
<evidence type="ECO:0000255" key="3">
    <source>
        <dbReference type="PROSITE-ProRule" id="PRU00085"/>
    </source>
</evidence>
<evidence type="ECO:0000269" key="4">
    <source>
    </source>
</evidence>
<evidence type="ECO:0000269" key="5">
    <source>
    </source>
</evidence>
<evidence type="ECO:0000269" key="6">
    <source>
    </source>
</evidence>
<evidence type="ECO:0000305" key="7"/>
<sequence>MTTSCSSQVRQNYHQDSEAAINRQINLELYASYVYLSMSYYFDRDDVALKNFAKYFLHQSHGGRGHAEKLMKLQTQRGARIFLQDIMKPERDDWENGLTAMEFALHVVKNVYQSLLELHKLATDKNDPHLCDFIETHYLHEQVKAIKELGDHITNLHRMGAPEYGMAEYLFDKHTLGSSES</sequence>
<dbReference type="EC" id="1.16.3.1" evidence="1"/>
<dbReference type="EMBL" id="D15071">
    <property type="protein sequence ID" value="BAA03666.1"/>
    <property type="molecule type" value="mRNA"/>
</dbReference>
<dbReference type="PIR" id="S06279">
    <property type="entry name" value="S06279"/>
</dbReference>
<dbReference type="RefSeq" id="NP_999140.1">
    <property type="nucleotide sequence ID" value="NM_213975.1"/>
</dbReference>
<dbReference type="SMR" id="P19130"/>
<dbReference type="FunCoup" id="P19130">
    <property type="interactions" value="354"/>
</dbReference>
<dbReference type="IntAct" id="P19130">
    <property type="interactions" value="1"/>
</dbReference>
<dbReference type="STRING" id="9823.ENSSSCP00000044712"/>
<dbReference type="PaxDb" id="9823-ENSSSCP00000026601"/>
<dbReference type="PeptideAtlas" id="P19130"/>
<dbReference type="GeneID" id="397030"/>
<dbReference type="KEGG" id="ssc:397030"/>
<dbReference type="CTD" id="2495"/>
<dbReference type="eggNOG" id="KOG2332">
    <property type="taxonomic scope" value="Eukaryota"/>
</dbReference>
<dbReference type="InParanoid" id="P19130"/>
<dbReference type="OrthoDB" id="186462at2759"/>
<dbReference type="ChiTaRS" id="FTH1">
    <property type="organism name" value="pig"/>
</dbReference>
<dbReference type="Proteomes" id="UP000008227">
    <property type="component" value="Unplaced"/>
</dbReference>
<dbReference type="Proteomes" id="UP000314985">
    <property type="component" value="Unplaced"/>
</dbReference>
<dbReference type="Proteomes" id="UP000694570">
    <property type="component" value="Unplaced"/>
</dbReference>
<dbReference type="Proteomes" id="UP000694571">
    <property type="component" value="Unplaced"/>
</dbReference>
<dbReference type="Proteomes" id="UP000694720">
    <property type="component" value="Unplaced"/>
</dbReference>
<dbReference type="Proteomes" id="UP000694722">
    <property type="component" value="Unplaced"/>
</dbReference>
<dbReference type="Proteomes" id="UP000694723">
    <property type="component" value="Unplaced"/>
</dbReference>
<dbReference type="Proteomes" id="UP000694724">
    <property type="component" value="Unplaced"/>
</dbReference>
<dbReference type="Proteomes" id="UP000694725">
    <property type="component" value="Unplaced"/>
</dbReference>
<dbReference type="Proteomes" id="UP000694726">
    <property type="component" value="Unplaced"/>
</dbReference>
<dbReference type="Proteomes" id="UP000694727">
    <property type="component" value="Unplaced"/>
</dbReference>
<dbReference type="Proteomes" id="UP000694728">
    <property type="component" value="Unplaced"/>
</dbReference>
<dbReference type="GO" id="GO:0005776">
    <property type="term" value="C:autophagosome"/>
    <property type="evidence" value="ECO:0007669"/>
    <property type="project" value="UniProtKB-SubCell"/>
</dbReference>
<dbReference type="GO" id="GO:0005737">
    <property type="term" value="C:cytoplasm"/>
    <property type="evidence" value="ECO:0000318"/>
    <property type="project" value="GO_Central"/>
</dbReference>
<dbReference type="GO" id="GO:0031410">
    <property type="term" value="C:cytoplasmic vesicle"/>
    <property type="evidence" value="ECO:0007669"/>
    <property type="project" value="UniProtKB-KW"/>
</dbReference>
<dbReference type="GO" id="GO:0005764">
    <property type="term" value="C:lysosome"/>
    <property type="evidence" value="ECO:0007669"/>
    <property type="project" value="UniProtKB-SubCell"/>
</dbReference>
<dbReference type="GO" id="GO:0008199">
    <property type="term" value="F:ferric iron binding"/>
    <property type="evidence" value="ECO:0000318"/>
    <property type="project" value="GO_Central"/>
</dbReference>
<dbReference type="GO" id="GO:0008198">
    <property type="term" value="F:ferrous iron binding"/>
    <property type="evidence" value="ECO:0000318"/>
    <property type="project" value="GO_Central"/>
</dbReference>
<dbReference type="GO" id="GO:0004322">
    <property type="term" value="F:ferroxidase activity"/>
    <property type="evidence" value="ECO:0007669"/>
    <property type="project" value="UniProtKB-EC"/>
</dbReference>
<dbReference type="GO" id="GO:0006879">
    <property type="term" value="P:intracellular iron ion homeostasis"/>
    <property type="evidence" value="ECO:0007669"/>
    <property type="project" value="UniProtKB-KW"/>
</dbReference>
<dbReference type="GO" id="GO:0006826">
    <property type="term" value="P:iron ion transport"/>
    <property type="evidence" value="ECO:0000318"/>
    <property type="project" value="GO_Central"/>
</dbReference>
<dbReference type="GO" id="GO:0110076">
    <property type="term" value="P:negative regulation of ferroptosis"/>
    <property type="evidence" value="ECO:0000250"/>
    <property type="project" value="UniProtKB"/>
</dbReference>
<dbReference type="CDD" id="cd01056">
    <property type="entry name" value="Euk_Ferritin"/>
    <property type="match status" value="1"/>
</dbReference>
<dbReference type="FunFam" id="1.20.1260.10:FF:000024">
    <property type="entry name" value="Ferritin heavy chain"/>
    <property type="match status" value="1"/>
</dbReference>
<dbReference type="Gene3D" id="1.20.1260.10">
    <property type="match status" value="1"/>
</dbReference>
<dbReference type="InterPro" id="IPR001519">
    <property type="entry name" value="Ferritin"/>
</dbReference>
<dbReference type="InterPro" id="IPR012347">
    <property type="entry name" value="Ferritin-like"/>
</dbReference>
<dbReference type="InterPro" id="IPR009040">
    <property type="entry name" value="Ferritin-like_diiron"/>
</dbReference>
<dbReference type="InterPro" id="IPR009078">
    <property type="entry name" value="Ferritin-like_SF"/>
</dbReference>
<dbReference type="InterPro" id="IPR014034">
    <property type="entry name" value="Ferritin_CS"/>
</dbReference>
<dbReference type="InterPro" id="IPR008331">
    <property type="entry name" value="Ferritin_DPS_dom"/>
</dbReference>
<dbReference type="PANTHER" id="PTHR11431">
    <property type="entry name" value="FERRITIN"/>
    <property type="match status" value="1"/>
</dbReference>
<dbReference type="PANTHER" id="PTHR11431:SF37">
    <property type="entry name" value="FERRITIN HEAVY CHAIN"/>
    <property type="match status" value="1"/>
</dbReference>
<dbReference type="Pfam" id="PF00210">
    <property type="entry name" value="Ferritin"/>
    <property type="match status" value="1"/>
</dbReference>
<dbReference type="SUPFAM" id="SSF47240">
    <property type="entry name" value="Ferritin-like"/>
    <property type="match status" value="1"/>
</dbReference>
<dbReference type="PROSITE" id="PS00204">
    <property type="entry name" value="FERRITIN_2"/>
    <property type="match status" value="1"/>
</dbReference>
<dbReference type="PROSITE" id="PS50905">
    <property type="entry name" value="FERRITIN_LIKE"/>
    <property type="match status" value="1"/>
</dbReference>
<organism>
    <name type="scientific">Sus scrofa</name>
    <name type="common">Pig</name>
    <dbReference type="NCBI Taxonomy" id="9823"/>
    <lineage>
        <taxon>Eukaryota</taxon>
        <taxon>Metazoa</taxon>
        <taxon>Chordata</taxon>
        <taxon>Craniata</taxon>
        <taxon>Vertebrata</taxon>
        <taxon>Euteleostomi</taxon>
        <taxon>Mammalia</taxon>
        <taxon>Eutheria</taxon>
        <taxon>Laurasiatheria</taxon>
        <taxon>Artiodactyla</taxon>
        <taxon>Suina</taxon>
        <taxon>Suidae</taxon>
        <taxon>Sus</taxon>
    </lineage>
</organism>
<keyword id="KW-0007">Acetylation</keyword>
<keyword id="KW-0963">Cytoplasm</keyword>
<keyword id="KW-0968">Cytoplasmic vesicle</keyword>
<keyword id="KW-0903">Direct protein sequencing</keyword>
<keyword id="KW-0945">Host-virus interaction</keyword>
<keyword id="KW-0408">Iron</keyword>
<keyword id="KW-0409">Iron storage</keyword>
<keyword id="KW-0458">Lysosome</keyword>
<keyword id="KW-0479">Metal-binding</keyword>
<keyword id="KW-0560">Oxidoreductase</keyword>
<keyword id="KW-0597">Phosphoprotein</keyword>
<keyword id="KW-1185">Reference proteome</keyword>
<proteinExistence type="evidence at protein level"/>
<name>FRIH_PIG</name>
<feature type="chain" id="PRO_0000424475" description="Ferritin heavy chain">
    <location>
        <begin position="1"/>
        <end position="181"/>
    </location>
</feature>
<feature type="initiator methionine" description="Removed; alternate" evidence="1">
    <location>
        <position position="1"/>
    </location>
</feature>
<feature type="chain" id="PRO_0000201051" description="Ferritin heavy chain, N-terminally processed">
    <location>
        <begin position="2"/>
        <end position="181"/>
    </location>
</feature>
<feature type="domain" description="Ferritin-like diiron" evidence="3">
    <location>
        <begin position="11"/>
        <end position="160"/>
    </location>
</feature>
<feature type="modified residue" description="N-acetylmethionine" evidence="1">
    <location>
        <position position="1"/>
    </location>
</feature>
<feature type="modified residue" description="N-acetylthreonine; in Ferritin heavy chain, N-terminally processed" evidence="1">
    <location>
        <position position="2"/>
    </location>
</feature>
<feature type="modified residue" description="Phosphoserine" evidence="1">
    <location>
        <position position="179"/>
    </location>
</feature>
<feature type="sequence variant">
    <original>V</original>
    <variation>M</variation>
    <location>
        <position position="111"/>
    </location>
</feature>
<feature type="sequence variant">
    <original>L</original>
    <variation>H</variation>
    <location>
        <position position="116"/>
    </location>
</feature>
<feature type="sequence conflict" description="In Ref. 2; AA sequence." evidence="7" ref="2">
    <original>F</original>
    <variation>C</variation>
    <location>
        <position position="103"/>
    </location>
</feature>
<feature type="sequence conflict" description="In Ref. 2; AA sequence." evidence="7" ref="2">
    <original>VV</original>
    <variation>LE</variation>
    <location>
        <begin position="107"/>
        <end position="108"/>
    </location>
</feature>
<feature type="sequence conflict" description="In Ref. 2; AA sequence." evidence="7" ref="2">
    <original>Y</original>
    <variation>N</variation>
    <location>
        <position position="112"/>
    </location>
</feature>
<feature type="sequence conflict" description="In Ref. 2; AA sequence." evidence="7" ref="2">
    <original>H</original>
    <variation>D</variation>
    <location>
        <position position="140"/>
    </location>
</feature>
<gene>
    <name type="primary">FTH1</name>
    <name type="synonym">FTH</name>
</gene>
<reference key="1">
    <citation type="submission" date="1993-05" db="EMBL/GenBank/DDBJ databases">
        <authorList>
            <person name="Hamasima N."/>
            <person name="Suzuki H."/>
            <person name="Fujii H."/>
            <person name="Ito T."/>
            <person name="Murakami Y."/>
            <person name="Yamada R."/>
            <person name="Yazawa T."/>
            <person name="Yasue H."/>
        </authorList>
    </citation>
    <scope>NUCLEOTIDE SEQUENCE [MRNA]</scope>
</reference>
<reference key="2">
    <citation type="journal article" date="1987" name="Arch. Biochem. Biophys.">
        <title>Isolation and partial amino acid sequence of three subunit species of porcine spleen ferritin: evidence of multiple H subunits.</title>
        <authorList>
            <person name="Collawn J.F. Jr."/>
            <person name="Gowan L.K."/>
            <person name="Crow H."/>
            <person name="Schwabe C."/>
            <person name="Fish W.W."/>
        </authorList>
    </citation>
    <scope>PROTEIN SEQUENCE OF 102-181</scope>
    <source>
        <tissue>Spleen</tissue>
    </source>
</reference>
<reference key="3">
    <citation type="journal article" date="2018" name="Sci. Rep.">
        <title>FHC, an NS4B-interacting Protein, Enhances Classical Swine Fever Virus Propagation and Acts Positively in Viral Anti-apoptosis.</title>
        <authorList>
            <person name="Qian G."/>
            <person name="Lv H."/>
            <person name="Lin J."/>
            <person name="Li X."/>
            <person name="Lv Q."/>
            <person name="Wang T."/>
            <person name="Zhang J."/>
            <person name="Dong W."/>
            <person name="Guo K."/>
            <person name="Zhang Y."/>
        </authorList>
    </citation>
    <scope>INTERACTION WITH CLASSICAL SWINE FEVER VIRUS PROTEIN NS4B (MICROBIAL INFECTION)</scope>
    <scope>SUBCELLULAR LOCATION</scope>
</reference>
<reference key="4">
    <citation type="journal article" date="2015" name="J. Biosci.">
        <title>Porcine circovirus type 2 ORF4 protein binds heavy chain ferritin.</title>
        <authorList>
            <person name="Lv Q."/>
            <person name="Guo K."/>
            <person name="Wang T."/>
            <person name="Zhang C."/>
            <person name="Zhang Y."/>
        </authorList>
    </citation>
    <scope>INTERACTION WITH PCV2 ORF4 (MICROBIAL INFECTION)</scope>
</reference>
<reference key="5">
    <citation type="journal article" date="2016" name="J. Gen. Virol.">
        <title>The ORF4 protein of porcine circovirus type 2 antagonizes apoptosis by stabilizing the concentration of ferritin heavy chain through physical interaction.</title>
        <authorList>
            <person name="Lv Q."/>
            <person name="Guo K."/>
            <person name="Zhang G."/>
            <person name="Zhang Y."/>
        </authorList>
    </citation>
    <scope>FUNCTION (MICROBIAL INFECTION)</scope>
    <scope>INTERACTION PCV2 ORF4 (MICROBIAL INFECTION)</scope>
</reference>
<protein>
    <recommendedName>
        <fullName>Ferritin heavy chain</fullName>
        <shortName>Ferritin H subunit</shortName>
        <ecNumber evidence="1">1.16.3.1</ecNumber>
    </recommendedName>
    <component>
        <recommendedName>
            <fullName>Ferritin heavy chain, N-terminally processed</fullName>
        </recommendedName>
    </component>
</protein>
<accession>P19130</accession>
<accession>P19131</accession>
<comment type="function">
    <text evidence="1 2">Stores iron in a soluble, non-toxic, readily available form (By similarity). Important for iron homeostasis (By similarity). Has ferroxidase activity (By similarity). Iron is taken up in the ferrous form and deposited as ferric hydroxides after oxidation (By similarity). Also plays a role in delivery of iron to cells (By similarity). Mediates iron uptake in capsule cells of the developing kidney (By similarity). Delivery to lysosomes is mediated by the cargo receptor NCOA4 for autophagic degradation and release of iron (By similarity).</text>
</comment>
<comment type="function">
    <text evidence="5">(Microbial infection) Is unable to assume its function upon interaction with viral proteins, thereby increasing Fe concentration in the cytoplasm. This would inhibit the accumulation of reactive oxygen in host cells, leading to reduced apoptosis and increasing the survival of virus infected cell.</text>
</comment>
<comment type="catalytic activity">
    <reaction evidence="1">
        <text>4 Fe(2+) + O2 + 4 H(+) = 4 Fe(3+) + 2 H2O</text>
        <dbReference type="Rhea" id="RHEA:11148"/>
        <dbReference type="ChEBI" id="CHEBI:15377"/>
        <dbReference type="ChEBI" id="CHEBI:15378"/>
        <dbReference type="ChEBI" id="CHEBI:15379"/>
        <dbReference type="ChEBI" id="CHEBI:29033"/>
        <dbReference type="ChEBI" id="CHEBI:29034"/>
        <dbReference type="EC" id="1.16.3.1"/>
    </reaction>
</comment>
<comment type="subunit">
    <text evidence="1 2">Oligomer of 24 subunits. There are two types of subunits: L (light) chain and H (heavy) chain. The major chain can be light or heavy, depending on the species and tissue type. The functional molecule forms a roughly spherical shell with a diameter of 12 nm and contains a central cavity into which the insoluble mineral iron core is deposited. Interacts with NCOA4; NCOA4 promotes targeting of the iron-binding ferritin complex to autolysosomes following starvation or iron depletion (By similarity).</text>
</comment>
<comment type="subunit">
    <text evidence="6">(Microbial infection) Interacts with classical swine fever virus protein NS4B.</text>
</comment>
<comment type="subunit">
    <text evidence="4 5">(Microbial infection) Interacts with Porcine circovirus 2 ORF4 protein.</text>
</comment>
<comment type="subcellular location">
    <subcellularLocation>
        <location evidence="6">Cytoplasm</location>
    </subcellularLocation>
    <subcellularLocation>
        <location evidence="1">Lysosome</location>
    </subcellularLocation>
    <subcellularLocation>
        <location evidence="1">Cytoplasmic vesicle</location>
        <location evidence="1">Autophagosome</location>
    </subcellularLocation>
</comment>
<comment type="similarity">
    <text evidence="7">Belongs to the ferritin family.</text>
</comment>